<accession>P10789</accession>
<reference key="1">
    <citation type="journal article" date="1988" name="FEBS Lett.">
        <title>Amino acid sequences of ribosomal proteins S11 from Bacillus stearothermophilus and S19 from Halobacterium marismortui. Comparison of the ribosomal protein S11 family.</title>
        <authorList>
            <person name="Kimura M."/>
            <person name="Kimura J."/>
            <person name="Hatakeyama T."/>
        </authorList>
    </citation>
    <scope>PROTEIN SEQUENCE OF 2-129</scope>
    <source>
        <strain>ATCC 29609 / DSM 2027 / NCA 1503 / NCIMB 8924</strain>
    </source>
</reference>
<reference key="2">
    <citation type="journal article" date="1974" name="FEBS Lett.">
        <title>Procaryotic ribosomal proteins: N-terminal sequence homologies and structural correspondence of 30 S ribosomal proteins from Escherichia coli and Bacillus stearothermophilus.</title>
        <authorList>
            <person name="Yaguchi M."/>
            <person name="Matheson A.T."/>
            <person name="Visentin L.P."/>
        </authorList>
    </citation>
    <scope>PROTEIN SEQUENCE OF 2-16</scope>
    <source>
        <strain>DSM 13240 / CIP 106956 / 10</strain>
    </source>
</reference>
<dbReference type="PIR" id="S01781">
    <property type="entry name" value="R3BS11"/>
</dbReference>
<dbReference type="SMR" id="P10789"/>
<dbReference type="GO" id="GO:1990904">
    <property type="term" value="C:ribonucleoprotein complex"/>
    <property type="evidence" value="ECO:0007669"/>
    <property type="project" value="UniProtKB-KW"/>
</dbReference>
<dbReference type="GO" id="GO:0005840">
    <property type="term" value="C:ribosome"/>
    <property type="evidence" value="ECO:0007669"/>
    <property type="project" value="UniProtKB-KW"/>
</dbReference>
<dbReference type="GO" id="GO:0019843">
    <property type="term" value="F:rRNA binding"/>
    <property type="evidence" value="ECO:0007669"/>
    <property type="project" value="UniProtKB-UniRule"/>
</dbReference>
<dbReference type="GO" id="GO:0003735">
    <property type="term" value="F:structural constituent of ribosome"/>
    <property type="evidence" value="ECO:0007669"/>
    <property type="project" value="InterPro"/>
</dbReference>
<dbReference type="GO" id="GO:0006412">
    <property type="term" value="P:translation"/>
    <property type="evidence" value="ECO:0007669"/>
    <property type="project" value="UniProtKB-UniRule"/>
</dbReference>
<dbReference type="FunFam" id="3.30.420.80:FF:000001">
    <property type="entry name" value="30S ribosomal protein S11"/>
    <property type="match status" value="1"/>
</dbReference>
<dbReference type="Gene3D" id="3.30.420.80">
    <property type="entry name" value="Ribosomal protein S11"/>
    <property type="match status" value="1"/>
</dbReference>
<dbReference type="HAMAP" id="MF_01310">
    <property type="entry name" value="Ribosomal_uS11"/>
    <property type="match status" value="1"/>
</dbReference>
<dbReference type="InterPro" id="IPR001971">
    <property type="entry name" value="Ribosomal_uS11"/>
</dbReference>
<dbReference type="InterPro" id="IPR019981">
    <property type="entry name" value="Ribosomal_uS11_bac-type"/>
</dbReference>
<dbReference type="InterPro" id="IPR018102">
    <property type="entry name" value="Ribosomal_uS11_CS"/>
</dbReference>
<dbReference type="InterPro" id="IPR036967">
    <property type="entry name" value="Ribosomal_uS11_sf"/>
</dbReference>
<dbReference type="NCBIfam" id="NF003698">
    <property type="entry name" value="PRK05309.1"/>
    <property type="match status" value="1"/>
</dbReference>
<dbReference type="NCBIfam" id="TIGR03632">
    <property type="entry name" value="uS11_bact"/>
    <property type="match status" value="1"/>
</dbReference>
<dbReference type="PANTHER" id="PTHR11759">
    <property type="entry name" value="40S RIBOSOMAL PROTEIN S14/30S RIBOSOMAL PROTEIN S11"/>
    <property type="match status" value="1"/>
</dbReference>
<dbReference type="Pfam" id="PF00411">
    <property type="entry name" value="Ribosomal_S11"/>
    <property type="match status" value="1"/>
</dbReference>
<dbReference type="PIRSF" id="PIRSF002131">
    <property type="entry name" value="Ribosomal_S11"/>
    <property type="match status" value="1"/>
</dbReference>
<dbReference type="SUPFAM" id="SSF53137">
    <property type="entry name" value="Translational machinery components"/>
    <property type="match status" value="1"/>
</dbReference>
<dbReference type="PROSITE" id="PS00054">
    <property type="entry name" value="RIBOSOMAL_S11"/>
    <property type="match status" value="1"/>
</dbReference>
<feature type="initiator methionine" description="Removed" evidence="2 3">
    <location>
        <position position="1"/>
    </location>
</feature>
<feature type="chain" id="PRO_0000123105" description="Small ribosomal subunit protein uS11">
    <location>
        <begin position="2"/>
        <end position="129"/>
    </location>
</feature>
<keyword id="KW-0903">Direct protein sequencing</keyword>
<keyword id="KW-0687">Ribonucleoprotein</keyword>
<keyword id="KW-0689">Ribosomal protein</keyword>
<keyword id="KW-0694">RNA-binding</keyword>
<keyword id="KW-0699">rRNA-binding</keyword>
<organism>
    <name type="scientific">Geobacillus stearothermophilus</name>
    <name type="common">Bacillus stearothermophilus</name>
    <dbReference type="NCBI Taxonomy" id="1422"/>
    <lineage>
        <taxon>Bacteria</taxon>
        <taxon>Bacillati</taxon>
        <taxon>Bacillota</taxon>
        <taxon>Bacilli</taxon>
        <taxon>Bacillales</taxon>
        <taxon>Anoxybacillaceae</taxon>
        <taxon>Geobacillus</taxon>
    </lineage>
</organism>
<gene>
    <name evidence="1" type="primary">rpsK</name>
</gene>
<comment type="function">
    <text evidence="1">Located on the platform of the 30S subunit, it bridges several disparate RNA helices of the 16S rRNA. Forms part of the Shine-Dalgarno cleft in the 70S ribosome.</text>
</comment>
<comment type="subunit">
    <text evidence="1">Part of the 30S ribosomal subunit. Interacts with proteins S7 and S18. Binds to IF-3.</text>
</comment>
<comment type="similarity">
    <text evidence="1">Belongs to the universal ribosomal protein uS11 family.</text>
</comment>
<name>RS11_GEOSE</name>
<proteinExistence type="evidence at protein level"/>
<evidence type="ECO:0000255" key="1">
    <source>
        <dbReference type="HAMAP-Rule" id="MF_01310"/>
    </source>
</evidence>
<evidence type="ECO:0000269" key="2">
    <source>
    </source>
</evidence>
<evidence type="ECO:0000269" key="3">
    <source>
    </source>
</evidence>
<evidence type="ECO:0000305" key="4"/>
<protein>
    <recommendedName>
        <fullName evidence="1">Small ribosomal subunit protein uS11</fullName>
    </recommendedName>
    <alternativeName>
        <fullName evidence="4">30S ribosomal protein S11</fullName>
        <shortName>BS11</shortName>
    </alternativeName>
</protein>
<sequence>MARRTNTRKRRVRKNIDTGIAHIRSTFNNTIVTITDVHGNALAWASAGSLGFKGSRKSTPFAAQMAAEAAAKASMEHGMKTVEVNVKGPGAGREAAIRALQAAGLEITAIKDVTPIPHDGCRPPKRRRV</sequence>